<protein>
    <recommendedName>
        <fullName evidence="1">Nucleoside diphosphate kinase</fullName>
        <shortName evidence="1">NDK</shortName>
        <shortName evidence="1">NDP kinase</shortName>
        <ecNumber evidence="1">2.7.4.6</ecNumber>
    </recommendedName>
    <alternativeName>
        <fullName evidence="1">Nucleoside-2-P kinase</fullName>
    </alternativeName>
</protein>
<gene>
    <name evidence="1" type="primary">ndk</name>
    <name type="ordered locus">ML1469</name>
</gene>
<keyword id="KW-0067">ATP-binding</keyword>
<keyword id="KW-0963">Cytoplasm</keyword>
<keyword id="KW-0418">Kinase</keyword>
<keyword id="KW-0460">Magnesium</keyword>
<keyword id="KW-0479">Metal-binding</keyword>
<keyword id="KW-0546">Nucleotide metabolism</keyword>
<keyword id="KW-0547">Nucleotide-binding</keyword>
<keyword id="KW-0597">Phosphoprotein</keyword>
<keyword id="KW-1185">Reference proteome</keyword>
<keyword id="KW-0808">Transferase</keyword>
<feature type="chain" id="PRO_0000137007" description="Nucleoside diphosphate kinase">
    <location>
        <begin position="1"/>
        <end position="136"/>
    </location>
</feature>
<feature type="active site" description="Pros-phosphohistidine intermediate" evidence="1">
    <location>
        <position position="117"/>
    </location>
</feature>
<feature type="binding site" evidence="1">
    <location>
        <position position="10"/>
    </location>
    <ligand>
        <name>ATP</name>
        <dbReference type="ChEBI" id="CHEBI:30616"/>
    </ligand>
</feature>
<feature type="binding site" evidence="1">
    <location>
        <position position="58"/>
    </location>
    <ligand>
        <name>ATP</name>
        <dbReference type="ChEBI" id="CHEBI:30616"/>
    </ligand>
</feature>
<feature type="binding site" evidence="1">
    <location>
        <position position="86"/>
    </location>
    <ligand>
        <name>ATP</name>
        <dbReference type="ChEBI" id="CHEBI:30616"/>
    </ligand>
</feature>
<feature type="binding site" evidence="1">
    <location>
        <position position="92"/>
    </location>
    <ligand>
        <name>ATP</name>
        <dbReference type="ChEBI" id="CHEBI:30616"/>
    </ligand>
</feature>
<feature type="binding site" evidence="1">
    <location>
        <position position="104"/>
    </location>
    <ligand>
        <name>ATP</name>
        <dbReference type="ChEBI" id="CHEBI:30616"/>
    </ligand>
</feature>
<feature type="binding site" evidence="1">
    <location>
        <position position="114"/>
    </location>
    <ligand>
        <name>ATP</name>
        <dbReference type="ChEBI" id="CHEBI:30616"/>
    </ligand>
</feature>
<name>NDK_MYCLE</name>
<reference key="1">
    <citation type="journal article" date="2001" name="Nature">
        <title>Massive gene decay in the leprosy bacillus.</title>
        <authorList>
            <person name="Cole S.T."/>
            <person name="Eiglmeier K."/>
            <person name="Parkhill J."/>
            <person name="James K.D."/>
            <person name="Thomson N.R."/>
            <person name="Wheeler P.R."/>
            <person name="Honore N."/>
            <person name="Garnier T."/>
            <person name="Churcher C.M."/>
            <person name="Harris D.E."/>
            <person name="Mungall K.L."/>
            <person name="Basham D."/>
            <person name="Brown D."/>
            <person name="Chillingworth T."/>
            <person name="Connor R."/>
            <person name="Davies R.M."/>
            <person name="Devlin K."/>
            <person name="Duthoy S."/>
            <person name="Feltwell T."/>
            <person name="Fraser A."/>
            <person name="Hamlin N."/>
            <person name="Holroyd S."/>
            <person name="Hornsby T."/>
            <person name="Jagels K."/>
            <person name="Lacroix C."/>
            <person name="Maclean J."/>
            <person name="Moule S."/>
            <person name="Murphy L.D."/>
            <person name="Oliver K."/>
            <person name="Quail M.A."/>
            <person name="Rajandream M.A."/>
            <person name="Rutherford K.M."/>
            <person name="Rutter S."/>
            <person name="Seeger K."/>
            <person name="Simon S."/>
            <person name="Simmonds M."/>
            <person name="Skelton J."/>
            <person name="Squares R."/>
            <person name="Squares S."/>
            <person name="Stevens K."/>
            <person name="Taylor K."/>
            <person name="Whitehead S."/>
            <person name="Woodward J.R."/>
            <person name="Barrell B.G."/>
        </authorList>
    </citation>
    <scope>NUCLEOTIDE SEQUENCE [LARGE SCALE GENOMIC DNA]</scope>
    <source>
        <strain>TN</strain>
    </source>
</reference>
<accession>Q9CBZ0</accession>
<proteinExistence type="inferred from homology"/>
<sequence length="136" mass="14676">MTERTLVLIKPDAVERQLIGEIISRIERKGLTIAALELRQVGEELASQHYAEHESKPFFGSLLEFITSGPVMAAIVEGPRAVAAVRQLTGGTDPVEKAAPGTIRGDLALETQFNLVHGSDSTASAQREIALWFPGI</sequence>
<evidence type="ECO:0000255" key="1">
    <source>
        <dbReference type="HAMAP-Rule" id="MF_00451"/>
    </source>
</evidence>
<dbReference type="EC" id="2.7.4.6" evidence="1"/>
<dbReference type="EMBL" id="AL583922">
    <property type="protein sequence ID" value="CAC30419.1"/>
    <property type="molecule type" value="Genomic_DNA"/>
</dbReference>
<dbReference type="PIR" id="F87092">
    <property type="entry name" value="F87092"/>
</dbReference>
<dbReference type="RefSeq" id="NP_302034.1">
    <property type="nucleotide sequence ID" value="NC_002677.1"/>
</dbReference>
<dbReference type="RefSeq" id="WP_010908355.1">
    <property type="nucleotide sequence ID" value="NC_002677.1"/>
</dbReference>
<dbReference type="SMR" id="Q9CBZ0"/>
<dbReference type="STRING" id="272631.gene:17575307"/>
<dbReference type="KEGG" id="mle:ML1469"/>
<dbReference type="PATRIC" id="fig|272631.5.peg.2745"/>
<dbReference type="Leproma" id="ML1469"/>
<dbReference type="eggNOG" id="COG0105">
    <property type="taxonomic scope" value="Bacteria"/>
</dbReference>
<dbReference type="HOGENOM" id="CLU_060216_6_3_11"/>
<dbReference type="OrthoDB" id="9801161at2"/>
<dbReference type="Proteomes" id="UP000000806">
    <property type="component" value="Chromosome"/>
</dbReference>
<dbReference type="GO" id="GO:0005737">
    <property type="term" value="C:cytoplasm"/>
    <property type="evidence" value="ECO:0007669"/>
    <property type="project" value="UniProtKB-SubCell"/>
</dbReference>
<dbReference type="GO" id="GO:0005524">
    <property type="term" value="F:ATP binding"/>
    <property type="evidence" value="ECO:0007669"/>
    <property type="project" value="UniProtKB-UniRule"/>
</dbReference>
<dbReference type="GO" id="GO:0046872">
    <property type="term" value="F:metal ion binding"/>
    <property type="evidence" value="ECO:0007669"/>
    <property type="project" value="UniProtKB-KW"/>
</dbReference>
<dbReference type="GO" id="GO:0004550">
    <property type="term" value="F:nucleoside diphosphate kinase activity"/>
    <property type="evidence" value="ECO:0007669"/>
    <property type="project" value="UniProtKB-UniRule"/>
</dbReference>
<dbReference type="GO" id="GO:0006241">
    <property type="term" value="P:CTP biosynthetic process"/>
    <property type="evidence" value="ECO:0007669"/>
    <property type="project" value="UniProtKB-UniRule"/>
</dbReference>
<dbReference type="GO" id="GO:0006183">
    <property type="term" value="P:GTP biosynthetic process"/>
    <property type="evidence" value="ECO:0007669"/>
    <property type="project" value="UniProtKB-UniRule"/>
</dbReference>
<dbReference type="GO" id="GO:0006228">
    <property type="term" value="P:UTP biosynthetic process"/>
    <property type="evidence" value="ECO:0007669"/>
    <property type="project" value="UniProtKB-UniRule"/>
</dbReference>
<dbReference type="CDD" id="cd04413">
    <property type="entry name" value="NDPk_I"/>
    <property type="match status" value="1"/>
</dbReference>
<dbReference type="FunFam" id="3.30.70.141:FF:000003">
    <property type="entry name" value="Nucleoside diphosphate kinase"/>
    <property type="match status" value="1"/>
</dbReference>
<dbReference type="Gene3D" id="3.30.70.141">
    <property type="entry name" value="Nucleoside diphosphate kinase-like domain"/>
    <property type="match status" value="1"/>
</dbReference>
<dbReference type="HAMAP" id="MF_00451">
    <property type="entry name" value="NDP_kinase"/>
    <property type="match status" value="1"/>
</dbReference>
<dbReference type="InterPro" id="IPR034907">
    <property type="entry name" value="NDK-like_dom"/>
</dbReference>
<dbReference type="InterPro" id="IPR036850">
    <property type="entry name" value="NDK-like_dom_sf"/>
</dbReference>
<dbReference type="InterPro" id="IPR001564">
    <property type="entry name" value="Nucleoside_diP_kinase"/>
</dbReference>
<dbReference type="NCBIfam" id="NF001908">
    <property type="entry name" value="PRK00668.1"/>
    <property type="match status" value="1"/>
</dbReference>
<dbReference type="PANTHER" id="PTHR11349">
    <property type="entry name" value="NUCLEOSIDE DIPHOSPHATE KINASE"/>
    <property type="match status" value="1"/>
</dbReference>
<dbReference type="Pfam" id="PF00334">
    <property type="entry name" value="NDK"/>
    <property type="match status" value="1"/>
</dbReference>
<dbReference type="PRINTS" id="PR01243">
    <property type="entry name" value="NUCDPKINASE"/>
</dbReference>
<dbReference type="SMART" id="SM00562">
    <property type="entry name" value="NDK"/>
    <property type="match status" value="1"/>
</dbReference>
<dbReference type="SUPFAM" id="SSF54919">
    <property type="entry name" value="Nucleoside diphosphate kinase, NDK"/>
    <property type="match status" value="1"/>
</dbReference>
<dbReference type="PROSITE" id="PS51374">
    <property type="entry name" value="NDPK_LIKE"/>
    <property type="match status" value="1"/>
</dbReference>
<organism>
    <name type="scientific">Mycobacterium leprae (strain TN)</name>
    <dbReference type="NCBI Taxonomy" id="272631"/>
    <lineage>
        <taxon>Bacteria</taxon>
        <taxon>Bacillati</taxon>
        <taxon>Actinomycetota</taxon>
        <taxon>Actinomycetes</taxon>
        <taxon>Mycobacteriales</taxon>
        <taxon>Mycobacteriaceae</taxon>
        <taxon>Mycobacterium</taxon>
    </lineage>
</organism>
<comment type="function">
    <text evidence="1">Major role in the synthesis of nucleoside triphosphates other than ATP. The ATP gamma phosphate is transferred to the NDP beta phosphate via a ping-pong mechanism, using a phosphorylated active-site intermediate.</text>
</comment>
<comment type="catalytic activity">
    <reaction evidence="1">
        <text>a 2'-deoxyribonucleoside 5'-diphosphate + ATP = a 2'-deoxyribonucleoside 5'-triphosphate + ADP</text>
        <dbReference type="Rhea" id="RHEA:44640"/>
        <dbReference type="ChEBI" id="CHEBI:30616"/>
        <dbReference type="ChEBI" id="CHEBI:61560"/>
        <dbReference type="ChEBI" id="CHEBI:73316"/>
        <dbReference type="ChEBI" id="CHEBI:456216"/>
        <dbReference type="EC" id="2.7.4.6"/>
    </reaction>
</comment>
<comment type="catalytic activity">
    <reaction evidence="1">
        <text>a ribonucleoside 5'-diphosphate + ATP = a ribonucleoside 5'-triphosphate + ADP</text>
        <dbReference type="Rhea" id="RHEA:18113"/>
        <dbReference type="ChEBI" id="CHEBI:30616"/>
        <dbReference type="ChEBI" id="CHEBI:57930"/>
        <dbReference type="ChEBI" id="CHEBI:61557"/>
        <dbReference type="ChEBI" id="CHEBI:456216"/>
        <dbReference type="EC" id="2.7.4.6"/>
    </reaction>
</comment>
<comment type="cofactor">
    <cofactor evidence="1">
        <name>Mg(2+)</name>
        <dbReference type="ChEBI" id="CHEBI:18420"/>
    </cofactor>
</comment>
<comment type="subunit">
    <text evidence="1">Homotetramer.</text>
</comment>
<comment type="subcellular location">
    <subcellularLocation>
        <location evidence="1">Cytoplasm</location>
    </subcellularLocation>
</comment>
<comment type="similarity">
    <text evidence="1">Belongs to the NDK family.</text>
</comment>